<dbReference type="EC" id="2.7.8.5"/>
<dbReference type="EMBL" id="BX571856">
    <property type="protein sequence ID" value="CAG40261.1"/>
    <property type="molecule type" value="Genomic_DNA"/>
</dbReference>
<dbReference type="RefSeq" id="WP_001025093.1">
    <property type="nucleotide sequence ID" value="NC_002952.2"/>
</dbReference>
<dbReference type="SMR" id="Q6GHF2"/>
<dbReference type="KEGG" id="sar:SAR1259"/>
<dbReference type="HOGENOM" id="CLU_051314_2_3_9"/>
<dbReference type="UniPathway" id="UPA00084">
    <property type="reaction ID" value="UER00503"/>
</dbReference>
<dbReference type="Proteomes" id="UP000000596">
    <property type="component" value="Chromosome"/>
</dbReference>
<dbReference type="GO" id="GO:0005886">
    <property type="term" value="C:plasma membrane"/>
    <property type="evidence" value="ECO:0007669"/>
    <property type="project" value="UniProtKB-SubCell"/>
</dbReference>
<dbReference type="GO" id="GO:0008444">
    <property type="term" value="F:CDP-diacylglycerol-glycerol-3-phosphate 3-phosphatidyltransferase activity"/>
    <property type="evidence" value="ECO:0007669"/>
    <property type="project" value="UniProtKB-EC"/>
</dbReference>
<dbReference type="GO" id="GO:0006655">
    <property type="term" value="P:phosphatidylglycerol biosynthetic process"/>
    <property type="evidence" value="ECO:0007669"/>
    <property type="project" value="UniProtKB-UniPathway"/>
</dbReference>
<dbReference type="FunFam" id="1.20.120.1760:FF:000004">
    <property type="entry name" value="CDP-diacylglycerol--glycerol-3-phosphate 3-phosphatidyltransferase"/>
    <property type="match status" value="1"/>
</dbReference>
<dbReference type="Gene3D" id="1.20.120.1760">
    <property type="match status" value="1"/>
</dbReference>
<dbReference type="InterPro" id="IPR050324">
    <property type="entry name" value="CDP-alcohol_PTase-I"/>
</dbReference>
<dbReference type="InterPro" id="IPR000462">
    <property type="entry name" value="CDP-OH_P_trans"/>
</dbReference>
<dbReference type="InterPro" id="IPR043130">
    <property type="entry name" value="CDP-OH_PTrfase_TM_dom"/>
</dbReference>
<dbReference type="InterPro" id="IPR048254">
    <property type="entry name" value="CDP_ALCOHOL_P_TRANSF_CS"/>
</dbReference>
<dbReference type="InterPro" id="IPR004570">
    <property type="entry name" value="Phosphatidylglycerol_P_synth"/>
</dbReference>
<dbReference type="NCBIfam" id="TIGR00560">
    <property type="entry name" value="pgsA"/>
    <property type="match status" value="1"/>
</dbReference>
<dbReference type="PANTHER" id="PTHR14269:SF62">
    <property type="entry name" value="CDP-DIACYLGLYCEROL--GLYCEROL-3-PHOSPHATE 3-PHOSPHATIDYLTRANSFERASE 1, CHLOROPLASTIC"/>
    <property type="match status" value="1"/>
</dbReference>
<dbReference type="PANTHER" id="PTHR14269">
    <property type="entry name" value="CDP-DIACYLGLYCEROL--GLYCEROL-3-PHOSPHATE 3-PHOSPHATIDYLTRANSFERASE-RELATED"/>
    <property type="match status" value="1"/>
</dbReference>
<dbReference type="Pfam" id="PF01066">
    <property type="entry name" value="CDP-OH_P_transf"/>
    <property type="match status" value="1"/>
</dbReference>
<dbReference type="PIRSF" id="PIRSF000847">
    <property type="entry name" value="Phos_ph_gly_syn"/>
    <property type="match status" value="1"/>
</dbReference>
<dbReference type="PROSITE" id="PS00379">
    <property type="entry name" value="CDP_ALCOHOL_P_TRANSF"/>
    <property type="match status" value="1"/>
</dbReference>
<keyword id="KW-1003">Cell membrane</keyword>
<keyword id="KW-0444">Lipid biosynthesis</keyword>
<keyword id="KW-0443">Lipid metabolism</keyword>
<keyword id="KW-0472">Membrane</keyword>
<keyword id="KW-0594">Phospholipid biosynthesis</keyword>
<keyword id="KW-1208">Phospholipid metabolism</keyword>
<keyword id="KW-0808">Transferase</keyword>
<keyword id="KW-0812">Transmembrane</keyword>
<keyword id="KW-1133">Transmembrane helix</keyword>
<reference key="1">
    <citation type="journal article" date="2004" name="Proc. Natl. Acad. Sci. U.S.A.">
        <title>Complete genomes of two clinical Staphylococcus aureus strains: evidence for the rapid evolution of virulence and drug resistance.</title>
        <authorList>
            <person name="Holden M.T.G."/>
            <person name="Feil E.J."/>
            <person name="Lindsay J.A."/>
            <person name="Peacock S.J."/>
            <person name="Day N.P.J."/>
            <person name="Enright M.C."/>
            <person name="Foster T.J."/>
            <person name="Moore C.E."/>
            <person name="Hurst L."/>
            <person name="Atkin R."/>
            <person name="Barron A."/>
            <person name="Bason N."/>
            <person name="Bentley S.D."/>
            <person name="Chillingworth C."/>
            <person name="Chillingworth T."/>
            <person name="Churcher C."/>
            <person name="Clark L."/>
            <person name="Corton C."/>
            <person name="Cronin A."/>
            <person name="Doggett J."/>
            <person name="Dowd L."/>
            <person name="Feltwell T."/>
            <person name="Hance Z."/>
            <person name="Harris B."/>
            <person name="Hauser H."/>
            <person name="Holroyd S."/>
            <person name="Jagels K."/>
            <person name="James K.D."/>
            <person name="Lennard N."/>
            <person name="Line A."/>
            <person name="Mayes R."/>
            <person name="Moule S."/>
            <person name="Mungall K."/>
            <person name="Ormond D."/>
            <person name="Quail M.A."/>
            <person name="Rabbinowitsch E."/>
            <person name="Rutherford K.M."/>
            <person name="Sanders M."/>
            <person name="Sharp S."/>
            <person name="Simmonds M."/>
            <person name="Stevens K."/>
            <person name="Whitehead S."/>
            <person name="Barrell B.G."/>
            <person name="Spratt B.G."/>
            <person name="Parkhill J."/>
        </authorList>
    </citation>
    <scope>NUCLEOTIDE SEQUENCE [LARGE SCALE GENOMIC DNA]</scope>
    <source>
        <strain>MRSA252</strain>
    </source>
</reference>
<feature type="chain" id="PRO_0000056787" description="CDP-diacylglycerol--glycerol-3-phosphate 3-phosphatidyltransferase">
    <location>
        <begin position="1"/>
        <end position="192"/>
    </location>
</feature>
<feature type="transmembrane region" description="Helical" evidence="2">
    <location>
        <begin position="7"/>
        <end position="29"/>
    </location>
</feature>
<feature type="transmembrane region" description="Helical" evidence="2">
    <location>
        <begin position="44"/>
        <end position="63"/>
    </location>
</feature>
<feature type="transmembrane region" description="Helical" evidence="2">
    <location>
        <begin position="84"/>
        <end position="106"/>
    </location>
</feature>
<feature type="transmembrane region" description="Helical" evidence="2">
    <location>
        <begin position="129"/>
        <end position="151"/>
    </location>
</feature>
<feature type="transmembrane region" description="Helical" evidence="2">
    <location>
        <begin position="157"/>
        <end position="179"/>
    </location>
</feature>
<accession>Q6GHF2</accession>
<protein>
    <recommendedName>
        <fullName>CDP-diacylglycerol--glycerol-3-phosphate 3-phosphatidyltransferase</fullName>
        <ecNumber>2.7.8.5</ecNumber>
    </recommendedName>
    <alternativeName>
        <fullName>Phosphatidylglycerophosphate synthase</fullName>
        <shortName>PGP synthase</shortName>
    </alternativeName>
</protein>
<comment type="function">
    <text evidence="1">This protein catalyzes the committed step to the synthesis of the acidic phospholipids.</text>
</comment>
<comment type="catalytic activity">
    <reaction>
        <text>a CDP-1,2-diacyl-sn-glycerol + sn-glycerol 3-phosphate = a 1,2-diacyl-sn-glycero-3-phospho-(1'-sn-glycero-3'-phosphate) + CMP + H(+)</text>
        <dbReference type="Rhea" id="RHEA:12593"/>
        <dbReference type="ChEBI" id="CHEBI:15378"/>
        <dbReference type="ChEBI" id="CHEBI:57597"/>
        <dbReference type="ChEBI" id="CHEBI:58332"/>
        <dbReference type="ChEBI" id="CHEBI:60110"/>
        <dbReference type="ChEBI" id="CHEBI:60377"/>
        <dbReference type="EC" id="2.7.8.5"/>
    </reaction>
</comment>
<comment type="pathway">
    <text>Phospholipid metabolism; phosphatidylglycerol biosynthesis; phosphatidylglycerol from CDP-diacylglycerol: step 1/2.</text>
</comment>
<comment type="subcellular location">
    <subcellularLocation>
        <location evidence="1">Cell membrane</location>
        <topology evidence="1">Multi-pass membrane protein</topology>
    </subcellularLocation>
</comment>
<comment type="similarity">
    <text evidence="3">Belongs to the CDP-alcohol phosphatidyltransferase class-I family.</text>
</comment>
<name>PGSA_STAAR</name>
<sequence length="192" mass="21014">MNIPNQITVFRVVLIPVFILFALVDFGFGNVSFLGGYEIRIELLISGFIFILASLSDFVDGYLARKWNLVTNMGKFLDPLADKLLVASALIVLVQLGLTNSVVAIIIIAREFAVTGLRLLQIEQGFVSAAGQLGKIKTAVTMVAITWLLLGDPLATLIGLSLGQILLYIGVIFTILSGIEYFYKGRDVFKQK</sequence>
<gene>
    <name type="primary">pgsA</name>
    <name type="ordered locus">SAR1259</name>
</gene>
<evidence type="ECO:0000250" key="1"/>
<evidence type="ECO:0000255" key="2"/>
<evidence type="ECO:0000305" key="3"/>
<organism>
    <name type="scientific">Staphylococcus aureus (strain MRSA252)</name>
    <dbReference type="NCBI Taxonomy" id="282458"/>
    <lineage>
        <taxon>Bacteria</taxon>
        <taxon>Bacillati</taxon>
        <taxon>Bacillota</taxon>
        <taxon>Bacilli</taxon>
        <taxon>Bacillales</taxon>
        <taxon>Staphylococcaceae</taxon>
        <taxon>Staphylococcus</taxon>
    </lineage>
</organism>
<proteinExistence type="inferred from homology"/>